<organism>
    <name type="scientific">Shigella flexneri</name>
    <dbReference type="NCBI Taxonomy" id="623"/>
    <lineage>
        <taxon>Bacteria</taxon>
        <taxon>Pseudomonadati</taxon>
        <taxon>Pseudomonadota</taxon>
        <taxon>Gammaproteobacteria</taxon>
        <taxon>Enterobacterales</taxon>
        <taxon>Enterobacteriaceae</taxon>
        <taxon>Shigella</taxon>
    </lineage>
</organism>
<proteinExistence type="evidence at protein level"/>
<comment type="function">
    <text evidence="4 5 6">ADP-riboxanase effector that mediates arginine ADP-riboxanation of host caspases (PubMed:34671164, PubMed:35338844). ADP-riboxanation of host apoptotic caspases (CASP3 and CASP9) prevents their activation, thereby inhibiting host cell extrinsic and intrinsic apoptosis (PubMed:35338844). Does not catalyze ADP-riboxanation of host CASP4/CASP11 or CASP8 (PubMed:34671164, PubMed:35338844). In contrast to Ospc1 and OspC3, not able to inactivate host calmodulin (PubMed:35568036).</text>
</comment>
<comment type="catalytic activity">
    <reaction evidence="4 5">
        <text>L-arginyl-[protein] + NAD(+) = ADP-riboxanated L-argininyl-[protein] + nicotinamide + NH4(+) + H(+)</text>
        <dbReference type="Rhea" id="RHEA:69500"/>
        <dbReference type="Rhea" id="RHEA-COMP:10532"/>
        <dbReference type="Rhea" id="RHEA-COMP:17719"/>
        <dbReference type="ChEBI" id="CHEBI:15378"/>
        <dbReference type="ChEBI" id="CHEBI:17154"/>
        <dbReference type="ChEBI" id="CHEBI:28938"/>
        <dbReference type="ChEBI" id="CHEBI:29965"/>
        <dbReference type="ChEBI" id="CHEBI:57540"/>
        <dbReference type="ChEBI" id="CHEBI:184300"/>
    </reaction>
    <physiologicalReaction direction="left-to-right" evidence="4 5">
        <dbReference type="Rhea" id="RHEA:69501"/>
    </physiologicalReaction>
</comment>
<comment type="subcellular location">
    <subcellularLocation>
        <location evidence="3">Secreted</location>
    </subcellularLocation>
    <text evidence="3">Secreted via the type III secretion system (T3SS).</text>
</comment>
<comment type="similarity">
    <text evidence="8">Belongs to the OspC family.</text>
</comment>
<reference key="1">
    <citation type="journal article" date="2013" name="Cell Host Microbe">
        <title>The Shigella OspC3 effector inhibits caspase-4, antagonizes inflammatory cell death, and promotes epithelial infection.</title>
        <authorList>
            <person name="Kobayashi T."/>
            <person name="Ogawa M."/>
            <person name="Sanada T."/>
            <person name="Mimuro H."/>
            <person name="Kim M."/>
            <person name="Ashida H."/>
            <person name="Akakura R."/>
            <person name="Yoshida M."/>
            <person name="Kawalec M."/>
            <person name="Reichhart J.M."/>
            <person name="Mizushima T."/>
            <person name="Sasakawa C."/>
        </authorList>
    </citation>
    <scope>NUCLEOTIDE SEQUENCE [GENOMIC DNA]</scope>
    <scope>SUBCELLULAR LOCATION</scope>
    <source>
        <strain>YSH6000 / Serotype 2a</strain>
        <plasmid>pMYSH6000</plasmid>
    </source>
</reference>
<reference key="2">
    <citation type="journal article" date="2002" name="Nucleic Acids Res.">
        <title>Genome sequence of Shigella flexneri 2a: insights into pathogenicity through comparison with genomes of Escherichia coli K12 and O157.</title>
        <authorList>
            <person name="Jin Q."/>
            <person name="Yuan Z."/>
            <person name="Xu J."/>
            <person name="Wang Y."/>
            <person name="Shen Y."/>
            <person name="Lu W."/>
            <person name="Wang J."/>
            <person name="Liu H."/>
            <person name="Yang J."/>
            <person name="Yang F."/>
            <person name="Zhang X."/>
            <person name="Zhang J."/>
            <person name="Yang G."/>
            <person name="Wu H."/>
            <person name="Qu D."/>
            <person name="Dong J."/>
            <person name="Sun L."/>
            <person name="Xue Y."/>
            <person name="Zhao A."/>
            <person name="Gao Y."/>
            <person name="Zhu J."/>
            <person name="Kan B."/>
            <person name="Ding K."/>
            <person name="Chen S."/>
            <person name="Cheng H."/>
            <person name="Yao Z."/>
            <person name="He B."/>
            <person name="Chen R."/>
            <person name="Ma D."/>
            <person name="Qiang B."/>
            <person name="Wen Y."/>
            <person name="Hou Y."/>
            <person name="Yu J."/>
        </authorList>
    </citation>
    <scope>NUCLEOTIDE SEQUENCE [LARGE SCALE GENOMIC DNA]</scope>
    <source>
        <strain>301 / Serotype 2a</strain>
        <plasmid>pCP301</plasmid>
    </source>
</reference>
<reference key="3">
    <citation type="journal article" date="2021" name="Nature">
        <title>Shigella evades pyroptosis by arginine ADP-riboxanation of caspase-11.</title>
        <authorList>
            <person name="Li Z."/>
            <person name="Liu W."/>
            <person name="Fu J."/>
            <person name="Cheng S."/>
            <person name="Xu Y."/>
            <person name="Wang Z."/>
            <person name="Liu X."/>
            <person name="Shi X."/>
            <person name="Liu Y."/>
            <person name="Qi X."/>
            <person name="Liu X."/>
            <person name="Ding J."/>
            <person name="Shao F."/>
        </authorList>
    </citation>
    <scope>FUNCTION</scope>
    <scope>CATALYTIC ACTIVITY</scope>
    <source>
        <strain>ATCC 700930 / 2457T / Serotype 2a</strain>
    </source>
</reference>
<reference key="4">
    <citation type="journal article" date="2022" name="Cell">
        <title>A family of conserved bacterial virulence factors dampens interferon responses by blocking calcium signaling.</title>
        <authorList>
            <person name="Alphonse N."/>
            <person name="Wanford J.J."/>
            <person name="Voak A.A."/>
            <person name="Gay J."/>
            <person name="Venkhaya S."/>
            <person name="Burroughs O."/>
            <person name="Mathew S."/>
            <person name="Lee T."/>
            <person name="Evans S.L."/>
            <person name="Zhao W."/>
            <person name="Frowde K."/>
            <person name="Alrehaili A."/>
            <person name="Dickenson R.E."/>
            <person name="Munk M."/>
            <person name="Panina S."/>
            <person name="Mahmood I.F."/>
            <person name="Llorian M."/>
            <person name="Stanifer M.L."/>
            <person name="Boulant S."/>
            <person name="Berchtold M.W."/>
            <person name="Bergeron J.R.C."/>
            <person name="Wack A."/>
            <person name="Lesser C.F."/>
            <person name="Odendall C."/>
        </authorList>
    </citation>
    <scope>FUNCTION</scope>
</reference>
<reference key="5">
    <citation type="journal article" date="2022" name="Mol. Cell">
        <title>Pathogen hijacks programmed cell death signaling by arginine ADPR-deacylization of caspases.</title>
        <authorList>
            <person name="Peng T."/>
            <person name="Tao X."/>
            <person name="Xia Z."/>
            <person name="Hu S."/>
            <person name="Xue J."/>
            <person name="Zhu Q."/>
            <person name="Pan X."/>
            <person name="Zhang Q."/>
            <person name="Li S."/>
        </authorList>
    </citation>
    <scope>FUNCTION</scope>
    <scope>CATALYTIC ACTIVITY</scope>
</reference>
<geneLocation type="plasmid">
    <name>pCP301</name>
</geneLocation>
<geneLocation type="plasmid">
    <name>pMYSH6000</name>
</geneLocation>
<name>OSPC2_SHIFL</name>
<gene>
    <name evidence="7" type="primary">ospC2</name>
    <name evidence="9" type="ordered locus">CP0063</name>
    <name evidence="9" type="ORF">SF_p0063</name>
</gene>
<keyword id="KW-0040">ANK repeat</keyword>
<keyword id="KW-0456">Lyase</keyword>
<keyword id="KW-0520">NAD</keyword>
<keyword id="KW-0614">Plasmid</keyword>
<keyword id="KW-1185">Reference proteome</keyword>
<keyword id="KW-0677">Repeat</keyword>
<keyword id="KW-0964">Secreted</keyword>
<keyword id="KW-0800">Toxin</keyword>
<keyword id="KW-0843">Virulence</keyword>
<feature type="chain" id="PRO_0000455083" description="Arginine ADP-riboxanase OspC2">
    <location>
        <begin position="1"/>
        <end position="484"/>
    </location>
</feature>
<feature type="repeat" description="ANK 1" evidence="2">
    <location>
        <begin position="414"/>
        <end position="444"/>
    </location>
</feature>
<feature type="repeat" description="ANK 2" evidence="2">
    <location>
        <begin position="451"/>
        <end position="480"/>
    </location>
</feature>
<feature type="active site" evidence="1">
    <location>
        <position position="326"/>
    </location>
</feature>
<feature type="binding site" evidence="1">
    <location>
        <position position="143"/>
    </location>
    <ligand>
        <name>NAD(+)</name>
        <dbReference type="ChEBI" id="CHEBI:57540"/>
    </ligand>
</feature>
<feature type="binding site" evidence="1">
    <location>
        <position position="144"/>
    </location>
    <ligand>
        <name>NAD(+)</name>
        <dbReference type="ChEBI" id="CHEBI:57540"/>
    </ligand>
</feature>
<feature type="binding site" evidence="1">
    <location>
        <position position="145"/>
    </location>
    <ligand>
        <name>NAD(+)</name>
        <dbReference type="ChEBI" id="CHEBI:57540"/>
    </ligand>
</feature>
<feature type="binding site" evidence="1">
    <location>
        <position position="149"/>
    </location>
    <ligand>
        <name>NAD(+)</name>
        <dbReference type="ChEBI" id="CHEBI:57540"/>
    </ligand>
</feature>
<feature type="binding site" evidence="1">
    <location>
        <position position="162"/>
    </location>
    <ligand>
        <name>NAD(+)</name>
        <dbReference type="ChEBI" id="CHEBI:57540"/>
    </ligand>
</feature>
<feature type="binding site" evidence="1">
    <location>
        <position position="172"/>
    </location>
    <ligand>
        <name>NAD(+)</name>
        <dbReference type="ChEBI" id="CHEBI:57540"/>
    </ligand>
</feature>
<feature type="binding site" evidence="1">
    <location>
        <position position="188"/>
    </location>
    <ligand>
        <name>NAD(+)</name>
        <dbReference type="ChEBI" id="CHEBI:57540"/>
    </ligand>
</feature>
<feature type="binding site" evidence="1">
    <location>
        <position position="206"/>
    </location>
    <ligand>
        <name>NAD(+)</name>
        <dbReference type="ChEBI" id="CHEBI:57540"/>
    </ligand>
</feature>
<feature type="binding site" evidence="1">
    <location>
        <position position="211"/>
    </location>
    <ligand>
        <name>NAD(+)</name>
        <dbReference type="ChEBI" id="CHEBI:57540"/>
    </ligand>
</feature>
<feature type="binding site" evidence="1">
    <location>
        <position position="231"/>
    </location>
    <ligand>
        <name>NAD(+)</name>
        <dbReference type="ChEBI" id="CHEBI:57540"/>
    </ligand>
</feature>
<feature type="binding site" evidence="1">
    <location>
        <position position="326"/>
    </location>
    <ligand>
        <name>NAD(+)</name>
        <dbReference type="ChEBI" id="CHEBI:57540"/>
    </ligand>
</feature>
<feature type="site" description="Important for catalytic activity" evidence="1">
    <location>
        <position position="143"/>
    </location>
</feature>
<feature type="site" description="Important for catalytic activity" evidence="1">
    <location>
        <position position="188"/>
    </location>
</feature>
<feature type="site" description="Important for catalytic activity" evidence="1">
    <location>
        <position position="211"/>
    </location>
</feature>
<feature type="site" description="Important for catalytic activity" evidence="1">
    <location>
        <position position="231"/>
    </location>
</feature>
<accession>Q8VSL8</accession>
<accession>A0A2G3EFG7</accession>
<accession>A0A2S4MRJ2</accession>
<dbReference type="EC" id="4.3.99.-" evidence="4 5"/>
<dbReference type="EMBL" id="AF386526">
    <property type="protein sequence ID" value="AAL72320.1"/>
    <property type="molecule type" value="Genomic_DNA"/>
</dbReference>
<dbReference type="EMBL" id="AB819726">
    <property type="protein sequence ID" value="BAN28454.1"/>
    <property type="molecule type" value="Genomic_DNA"/>
</dbReference>
<dbReference type="RefSeq" id="NP_858196.1">
    <property type="nucleotide sequence ID" value="NC_004851.1"/>
</dbReference>
<dbReference type="RefSeq" id="WP_000701108.1">
    <property type="nucleotide sequence ID" value="NZ_WPGT01000228.1"/>
</dbReference>
<dbReference type="SMR" id="Q8VSL8"/>
<dbReference type="PaxDb" id="198214-CP0063"/>
<dbReference type="GeneID" id="1238023"/>
<dbReference type="KEGG" id="sfl:CP0063"/>
<dbReference type="PATRIC" id="fig|198214.7.peg.5305"/>
<dbReference type="HOGENOM" id="CLU_053336_0_0_6"/>
<dbReference type="OMA" id="TAMWHAI"/>
<dbReference type="Proteomes" id="UP000001006">
    <property type="component" value="Plasmid pCP301"/>
</dbReference>
<dbReference type="GO" id="GO:0005576">
    <property type="term" value="C:extracellular region"/>
    <property type="evidence" value="ECO:0007669"/>
    <property type="project" value="UniProtKB-SubCell"/>
</dbReference>
<dbReference type="GO" id="GO:0140740">
    <property type="term" value="F:ADP-riboxanase activity"/>
    <property type="evidence" value="ECO:0000314"/>
    <property type="project" value="UniProtKB"/>
</dbReference>
<dbReference type="GO" id="GO:0090729">
    <property type="term" value="F:toxin activity"/>
    <property type="evidence" value="ECO:0007669"/>
    <property type="project" value="UniProtKB-KW"/>
</dbReference>
<dbReference type="InterPro" id="IPR010366">
    <property type="entry name" value="OspC1-4"/>
</dbReference>
<dbReference type="Pfam" id="PF06128">
    <property type="entry name" value="Shigella_OspC"/>
    <property type="match status" value="1"/>
</dbReference>
<sequence>MKIPEAVNHINVQNNIDLVDGKINPNKDTKALQKNISCVTNSSSSGISEKHLDHCADTVKSFLRKSIAAQSYSKMFSQGTSFKSLNLSIEAPSGARSSFRSLEHLDKVSRHYLSEIIQKTHPLSSDERHLLSIIINSDFNFRHQSNANLSNNTLNIKSFDKIKSENIQTYKNTFSEDIEEIANHDFVFFGVEISNHQETLPLNKTHHTVDFGANAYIIDHDSPYGYMTLTDHFDNAIPPVFYHEHQSFFLDNFKEVVDEVSRYVHGNQGKTDVPIFNTKDMRLGIGLHLIDFIRKSKDQRFREFCYNKNIDPVSLDRIINFVFQLEYHIPRMLSTDNFKKIRLRDISLEDAIKASNYEEINNKVTDKKMAHQALAYSLGNAKSDMALYLLSKFNFTKQDIAEMEKMNNNMYCELYDVEYLLSEDSANYKVLEYFISNGLVDVNKRFQKANSGDTMLDNAMKSKDSKTIDFLLKNGAVSGKRFGR</sequence>
<evidence type="ECO:0000250" key="1">
    <source>
        <dbReference type="UniProtKB" id="Q7NWF2"/>
    </source>
</evidence>
<evidence type="ECO:0000255" key="2"/>
<evidence type="ECO:0000269" key="3">
    <source>
    </source>
</evidence>
<evidence type="ECO:0000269" key="4">
    <source>
    </source>
</evidence>
<evidence type="ECO:0000269" key="5">
    <source>
    </source>
</evidence>
<evidence type="ECO:0000269" key="6">
    <source>
    </source>
</evidence>
<evidence type="ECO:0000303" key="7">
    <source>
    </source>
</evidence>
<evidence type="ECO:0000305" key="8"/>
<evidence type="ECO:0000312" key="9">
    <source>
        <dbReference type="EMBL" id="AAL72320.1"/>
    </source>
</evidence>
<protein>
    <recommendedName>
        <fullName evidence="8">Arginine ADP-riboxanase OspC2</fullName>
        <ecNumber evidence="4 5">4.3.99.-</ecNumber>
    </recommendedName>
</protein>